<organism>
    <name type="scientific">Streptococcus pyogenes serotype M28 (strain MGAS6180)</name>
    <dbReference type="NCBI Taxonomy" id="319701"/>
    <lineage>
        <taxon>Bacteria</taxon>
        <taxon>Bacillati</taxon>
        <taxon>Bacillota</taxon>
        <taxon>Bacilli</taxon>
        <taxon>Lactobacillales</taxon>
        <taxon>Streptococcaceae</taxon>
        <taxon>Streptococcus</taxon>
    </lineage>
</organism>
<evidence type="ECO:0000255" key="1">
    <source>
        <dbReference type="HAMAP-Rule" id="MF_00363"/>
    </source>
</evidence>
<reference key="1">
    <citation type="journal article" date="2005" name="J. Infect. Dis.">
        <title>Genome sequence of a serotype M28 strain of group A Streptococcus: potential new insights into puerperal sepsis and bacterial disease specificity.</title>
        <authorList>
            <person name="Green N.M."/>
            <person name="Zhang S."/>
            <person name="Porcella S.F."/>
            <person name="Nagiec M.J."/>
            <person name="Barbian K.D."/>
            <person name="Beres S.B."/>
            <person name="Lefebvre R.B."/>
            <person name="Musser J.M."/>
        </authorList>
    </citation>
    <scope>NUCLEOTIDE SEQUENCE [LARGE SCALE GENOMIC DNA]</scope>
    <source>
        <strain>MGAS6180</strain>
    </source>
</reference>
<gene>
    <name type="ordered locus">M28_Spy0291</name>
</gene>
<sequence>MSTAIWILLLIVALGVGVFGGIFIARKQIEKEIGEHPRLTPEAIREMMSQMGQKPSEAKIQQTYRNIIKQSKAAVSKGKK</sequence>
<keyword id="KW-1003">Cell membrane</keyword>
<keyword id="KW-0472">Membrane</keyword>
<keyword id="KW-0812">Transmembrane</keyword>
<keyword id="KW-1133">Transmembrane helix</keyword>
<feature type="chain" id="PRO_1000005646" description="UPF0154 protein M28_Spy0291">
    <location>
        <begin position="1"/>
        <end position="80"/>
    </location>
</feature>
<feature type="transmembrane region" description="Helical" evidence="1">
    <location>
        <begin position="4"/>
        <end position="24"/>
    </location>
</feature>
<proteinExistence type="inferred from homology"/>
<comment type="subcellular location">
    <subcellularLocation>
        <location evidence="1">Cell membrane</location>
        <topology evidence="1">Single-pass membrane protein</topology>
    </subcellularLocation>
</comment>
<comment type="similarity">
    <text evidence="1">Belongs to the UPF0154 family.</text>
</comment>
<dbReference type="EMBL" id="CP000056">
    <property type="protein sequence ID" value="AAX71405.1"/>
    <property type="molecule type" value="Genomic_DNA"/>
</dbReference>
<dbReference type="RefSeq" id="WP_002985908.1">
    <property type="nucleotide sequence ID" value="NC_007296.2"/>
</dbReference>
<dbReference type="SMR" id="Q48V51"/>
<dbReference type="KEGG" id="spb:M28_Spy0291"/>
<dbReference type="HOGENOM" id="CLU_180108_0_0_9"/>
<dbReference type="GO" id="GO:0005886">
    <property type="term" value="C:plasma membrane"/>
    <property type="evidence" value="ECO:0007669"/>
    <property type="project" value="UniProtKB-SubCell"/>
</dbReference>
<dbReference type="HAMAP" id="MF_00363">
    <property type="entry name" value="UPF0154"/>
    <property type="match status" value="1"/>
</dbReference>
<dbReference type="InterPro" id="IPR005359">
    <property type="entry name" value="UPF0154"/>
</dbReference>
<dbReference type="Pfam" id="PF03672">
    <property type="entry name" value="UPF0154"/>
    <property type="match status" value="1"/>
</dbReference>
<protein>
    <recommendedName>
        <fullName evidence="1">UPF0154 protein M28_Spy0291</fullName>
    </recommendedName>
</protein>
<accession>Q48V51</accession>
<name>Y291_STRPM</name>